<comment type="subcellular location">
    <subcellularLocation>
        <location evidence="2">Membrane</location>
        <topology evidence="2">Multi-pass membrane protein</topology>
    </subcellularLocation>
</comment>
<comment type="similarity">
    <text evidence="2">Belongs to the MIP/aquaporin (TC 1.A.8) family.</text>
</comment>
<comment type="caution">
    <text evidence="2">Could be the product of a pseudogene. This is the C-terminal part of aquaporin-2. In strain S288c and many laboratory strains, a natural 11 bp deletion in position 109 leads to a frameshift, which disrupts the gene coding for this protein and produces two ORFs YLL052C and YLL053C. A contiguous sequence for aquaporin-2 can be found in strain Sigma 1278B (AC P0CD89).</text>
</comment>
<name>YLL53_YEAST</name>
<gene>
    <name type="ordered locus">YLL053C</name>
    <name type="ORF">L0587</name>
</gene>
<keyword id="KW-0472">Membrane</keyword>
<keyword id="KW-1185">Reference proteome</keyword>
<keyword id="KW-0812">Transmembrane</keyword>
<keyword id="KW-1133">Transmembrane helix</keyword>
<reference key="1">
    <citation type="journal article" date="1997" name="Nature">
        <title>The nucleotide sequence of Saccharomyces cerevisiae chromosome XII.</title>
        <authorList>
            <person name="Johnston M."/>
            <person name="Hillier L.W."/>
            <person name="Riles L."/>
            <person name="Albermann K."/>
            <person name="Andre B."/>
            <person name="Ansorge W."/>
            <person name="Benes V."/>
            <person name="Brueckner M."/>
            <person name="Delius H."/>
            <person name="Dubois E."/>
            <person name="Duesterhoeft A."/>
            <person name="Entian K.-D."/>
            <person name="Floeth M."/>
            <person name="Goffeau A."/>
            <person name="Hebling U."/>
            <person name="Heumann K."/>
            <person name="Heuss-Neitzel D."/>
            <person name="Hilbert H."/>
            <person name="Hilger F."/>
            <person name="Kleine K."/>
            <person name="Koetter P."/>
            <person name="Louis E.J."/>
            <person name="Messenguy F."/>
            <person name="Mewes H.-W."/>
            <person name="Miosga T."/>
            <person name="Moestl D."/>
            <person name="Mueller-Auer S."/>
            <person name="Nentwich U."/>
            <person name="Obermaier B."/>
            <person name="Piravandi E."/>
            <person name="Pohl T.M."/>
            <person name="Portetelle D."/>
            <person name="Purnelle B."/>
            <person name="Rechmann S."/>
            <person name="Rieger M."/>
            <person name="Rinke M."/>
            <person name="Rose M."/>
            <person name="Scharfe M."/>
            <person name="Scherens B."/>
            <person name="Scholler P."/>
            <person name="Schwager C."/>
            <person name="Schwarz S."/>
            <person name="Underwood A.P."/>
            <person name="Urrestarazu L.A."/>
            <person name="Vandenbol M."/>
            <person name="Verhasselt P."/>
            <person name="Vierendeels F."/>
            <person name="Voet M."/>
            <person name="Volckaert G."/>
            <person name="Voss H."/>
            <person name="Wambutt R."/>
            <person name="Wedler E."/>
            <person name="Wedler H."/>
            <person name="Zimmermann F.K."/>
            <person name="Zollner A."/>
            <person name="Hani J."/>
            <person name="Hoheisel J.D."/>
        </authorList>
    </citation>
    <scope>NUCLEOTIDE SEQUENCE [LARGE SCALE GENOMIC DNA]</scope>
    <source>
        <strain>ATCC 204508 / S288c</strain>
    </source>
</reference>
<reference key="2">
    <citation type="journal article" date="2014" name="G3 (Bethesda)">
        <title>The reference genome sequence of Saccharomyces cerevisiae: Then and now.</title>
        <authorList>
            <person name="Engel S.R."/>
            <person name="Dietrich F.S."/>
            <person name="Fisk D.G."/>
            <person name="Binkley G."/>
            <person name="Balakrishnan R."/>
            <person name="Costanzo M.C."/>
            <person name="Dwight S.S."/>
            <person name="Hitz B.C."/>
            <person name="Karra K."/>
            <person name="Nash R.S."/>
            <person name="Weng S."/>
            <person name="Wong E.D."/>
            <person name="Lloyd P."/>
            <person name="Skrzypek M.S."/>
            <person name="Miyasato S.R."/>
            <person name="Simison M."/>
            <person name="Cherry J.M."/>
        </authorList>
    </citation>
    <scope>GENOME REANNOTATION</scope>
    <source>
        <strain>ATCC 204508 / S288c</strain>
    </source>
</reference>
<reference key="3">
    <citation type="journal article" date="2000" name="Yeast">
        <title>Polymorphism of Saccharomyces cerevisiae aquaporins.</title>
        <authorList>
            <person name="Laize V."/>
            <person name="Tacnet F."/>
            <person name="Ripoche P."/>
            <person name="Hohmann S."/>
        </authorList>
    </citation>
    <scope>POLYMORPHISM</scope>
</reference>
<reference key="4">
    <citation type="journal article" date="2001" name="Proc. Natl. Acad. Sci. U.S.A.">
        <title>Aquaporins in Saccharomyces: characterization of a second functional water channel protein.</title>
        <authorList>
            <person name="Carbrey J.M."/>
            <person name="Bonhivers M."/>
            <person name="Boeke J.D."/>
            <person name="Agre P."/>
        </authorList>
    </citation>
    <scope>POLYMORPHISM</scope>
</reference>
<reference key="5">
    <citation type="journal article" date="2006" name="Proc. Natl. Acad. Sci. U.S.A.">
        <title>A global topology map of the Saccharomyces cerevisiae membrane proteome.</title>
        <authorList>
            <person name="Kim H."/>
            <person name="Melen K."/>
            <person name="Oesterberg M."/>
            <person name="von Heijne G."/>
        </authorList>
    </citation>
    <scope>TOPOLOGY [LARGE SCALE ANALYSIS]</scope>
    <source>
        <strain>ATCC 208353 / W303-1A</strain>
    </source>
</reference>
<sequence length="152" mass="16456">MWFPQIIAGMAAGGAASAMTPGKVLFTNALGLGCSRSRGLFLEMFGTAVLCLTVLMTAVEKRETNFMAALPIGISLFMAHMALTGYTGTGVNPARSLGAAVAARYFPHYHWIYWISPLLGAFLAWSVWQLLQILDYTTYVNAEKAAGQKKED</sequence>
<feature type="chain" id="PRO_0000391656" description="Putative uncharacterized protein YLL053C">
    <location>
        <begin position="1"/>
        <end position="152"/>
    </location>
</feature>
<feature type="topological domain" description="Cytoplasmic" evidence="1">
    <location>
        <begin position="1"/>
        <end position="5"/>
    </location>
</feature>
<feature type="transmembrane region" description="Helical" evidence="1">
    <location>
        <begin position="6"/>
        <end position="26"/>
    </location>
</feature>
<feature type="topological domain" description="Extracellular" evidence="1">
    <location>
        <begin position="27"/>
        <end position="38"/>
    </location>
</feature>
<feature type="transmembrane region" description="Helical" evidence="1">
    <location>
        <begin position="39"/>
        <end position="59"/>
    </location>
</feature>
<feature type="topological domain" description="Cytoplasmic" evidence="1">
    <location>
        <begin position="60"/>
        <end position="65"/>
    </location>
</feature>
<feature type="transmembrane region" description="Helical" evidence="1">
    <location>
        <begin position="66"/>
        <end position="86"/>
    </location>
</feature>
<feature type="topological domain" description="Extracellular" evidence="1">
    <location>
        <begin position="87"/>
        <end position="110"/>
    </location>
</feature>
<feature type="transmembrane region" description="Helical" evidence="1">
    <location>
        <begin position="111"/>
        <end position="131"/>
    </location>
</feature>
<feature type="topological domain" description="Cytoplasmic" evidence="1">
    <location>
        <begin position="132"/>
        <end position="152"/>
    </location>
</feature>
<feature type="short sequence motif" description="NPA">
    <location>
        <begin position="92"/>
        <end position="94"/>
    </location>
</feature>
<organism>
    <name type="scientific">Saccharomyces cerevisiae (strain ATCC 204508 / S288c)</name>
    <name type="common">Baker's yeast</name>
    <dbReference type="NCBI Taxonomy" id="559292"/>
    <lineage>
        <taxon>Eukaryota</taxon>
        <taxon>Fungi</taxon>
        <taxon>Dikarya</taxon>
        <taxon>Ascomycota</taxon>
        <taxon>Saccharomycotina</taxon>
        <taxon>Saccharomycetes</taxon>
        <taxon>Saccharomycetales</taxon>
        <taxon>Saccharomycetaceae</taxon>
        <taxon>Saccharomyces</taxon>
    </lineage>
</organism>
<accession>P0CD98</accession>
<accession>D6VXV5</accession>
<accession>O93938</accession>
<accession>Q12258</accession>
<accession>Q12302</accession>
<accession>Q9C411</accession>
<dbReference type="EMBL" id="Z73158">
    <property type="protein sequence ID" value="CAA97505.1"/>
    <property type="molecule type" value="Genomic_DNA"/>
</dbReference>
<dbReference type="EMBL" id="Z47973">
    <property type="protein sequence ID" value="CAA88004.1"/>
    <property type="molecule type" value="Genomic_DNA"/>
</dbReference>
<dbReference type="EMBL" id="BK006945">
    <property type="protein sequence ID" value="DAA09271.1"/>
    <property type="molecule type" value="Genomic_DNA"/>
</dbReference>
<dbReference type="PIR" id="S50967">
    <property type="entry name" value="S50967"/>
</dbReference>
<dbReference type="RefSeq" id="NP_013047.1">
    <property type="nucleotide sequence ID" value="NM_001181873.1"/>
</dbReference>
<dbReference type="SMR" id="P0CD98"/>
<dbReference type="BioGRID" id="31262">
    <property type="interactions" value="99"/>
</dbReference>
<dbReference type="FunCoup" id="P0CD98">
    <property type="interactions" value="38"/>
</dbReference>
<dbReference type="STRING" id="4932.YLL053C"/>
<dbReference type="PaxDb" id="4932-YLL053C"/>
<dbReference type="EnsemblFungi" id="YLL053C_mRNA">
    <property type="protein sequence ID" value="YLL053C"/>
    <property type="gene ID" value="YLL053C"/>
</dbReference>
<dbReference type="GeneID" id="850673"/>
<dbReference type="KEGG" id="sce:YLL053C"/>
<dbReference type="AGR" id="SGD:S000003976"/>
<dbReference type="SGD" id="S000003976">
    <property type="gene designation" value="YLL053C"/>
</dbReference>
<dbReference type="VEuPathDB" id="FungiDB:YLL053C"/>
<dbReference type="eggNOG" id="KOG0223">
    <property type="taxonomic scope" value="Eukaryota"/>
</dbReference>
<dbReference type="GeneTree" id="ENSGT00940000176123"/>
<dbReference type="HOGENOM" id="CLU_127260_0_0_1"/>
<dbReference type="InParanoid" id="P0CD98"/>
<dbReference type="OMA" id="TTYVNAE"/>
<dbReference type="OrthoDB" id="3222at2759"/>
<dbReference type="BioCyc" id="YEAST:G3O-32152-MONOMER"/>
<dbReference type="BioGRID-ORCS" id="850673">
    <property type="hits" value="4 hits in 10 CRISPR screens"/>
</dbReference>
<dbReference type="Proteomes" id="UP000002311">
    <property type="component" value="Chromosome XII"/>
</dbReference>
<dbReference type="RNAct" id="P0CD98">
    <property type="molecule type" value="protein"/>
</dbReference>
<dbReference type="GO" id="GO:0005886">
    <property type="term" value="C:plasma membrane"/>
    <property type="evidence" value="ECO:0000318"/>
    <property type="project" value="GO_Central"/>
</dbReference>
<dbReference type="GO" id="GO:0015250">
    <property type="term" value="F:water channel activity"/>
    <property type="evidence" value="ECO:0000318"/>
    <property type="project" value="GO_Central"/>
</dbReference>
<dbReference type="FunFam" id="1.20.1080.10:FF:000048">
    <property type="entry name" value="Putative uncharacterized protein YLL053C"/>
    <property type="match status" value="1"/>
</dbReference>
<dbReference type="Gene3D" id="1.20.1080.10">
    <property type="entry name" value="Glycerol uptake facilitator protein"/>
    <property type="match status" value="1"/>
</dbReference>
<dbReference type="InterPro" id="IPR023271">
    <property type="entry name" value="Aquaporin-like"/>
</dbReference>
<dbReference type="InterPro" id="IPR034294">
    <property type="entry name" value="Aquaporin_transptr"/>
</dbReference>
<dbReference type="InterPro" id="IPR000425">
    <property type="entry name" value="MIP"/>
</dbReference>
<dbReference type="PANTHER" id="PTHR19139">
    <property type="entry name" value="AQUAPORIN TRANSPORTER"/>
    <property type="match status" value="1"/>
</dbReference>
<dbReference type="PANTHER" id="PTHR19139:SF199">
    <property type="entry name" value="MIP17260P"/>
    <property type="match status" value="1"/>
</dbReference>
<dbReference type="Pfam" id="PF00230">
    <property type="entry name" value="MIP"/>
    <property type="match status" value="1"/>
</dbReference>
<dbReference type="PRINTS" id="PR00783">
    <property type="entry name" value="MINTRINSICP"/>
</dbReference>
<dbReference type="SUPFAM" id="SSF81338">
    <property type="entry name" value="Aquaporin-like"/>
    <property type="match status" value="1"/>
</dbReference>
<evidence type="ECO:0000255" key="1"/>
<evidence type="ECO:0000305" key="2"/>
<protein>
    <recommendedName>
        <fullName>Putative uncharacterized protein YLL053C</fullName>
    </recommendedName>
</protein>
<proteinExistence type="uncertain"/>